<keyword id="KW-0007">Acetylation</keyword>
<keyword id="KW-0240">DNA-directed RNA polymerase</keyword>
<keyword id="KW-0548">Nucleotidyltransferase</keyword>
<keyword id="KW-1185">Reference proteome</keyword>
<keyword id="KW-0804">Transcription</keyword>
<keyword id="KW-0808">Transferase</keyword>
<reference key="1">
    <citation type="journal article" date="2007" name="J. Bacteriol.">
        <title>The genome sequence of avian pathogenic Escherichia coli strain O1:K1:H7 shares strong similarities with human extraintestinal pathogenic E. coli genomes.</title>
        <authorList>
            <person name="Johnson T.J."/>
            <person name="Kariyawasam S."/>
            <person name="Wannemuehler Y."/>
            <person name="Mangiamele P."/>
            <person name="Johnson S.J."/>
            <person name="Doetkott C."/>
            <person name="Skyberg J.A."/>
            <person name="Lynne A.M."/>
            <person name="Johnson J.R."/>
            <person name="Nolan L.K."/>
        </authorList>
    </citation>
    <scope>NUCLEOTIDE SEQUENCE [LARGE SCALE GENOMIC DNA]</scope>
</reference>
<proteinExistence type="inferred from homology"/>
<name>RPOB_ECOK1</name>
<sequence length="1342" mass="150632">MVYSYTEKKRIRKDFGKRPQVLDVPYLLSIQLDSFQKFIEQDPEGQYGLEAAFRSVFPIQSYSGNSELQYVSYRLGEPVFDVQECQIRGVTYSAPLRVKLRLVIYEREAPEGTVKDIKEQEVYMGEIPLMTDNGTFVINGTERVIVSQLHRSPGVFFDSDKGKTHSSGKVLYNARIIPYRGSWLDFEFDPKDNLFVRIDRRRKLPATIILRALNYTTEQILDLFFEKVIFEIRDNKLQMELVPERLRGETASFDIEANGKVYVEKGRRITARHIRQLEKDDVKLIEVPVEYIAGKVVAKDYIDESTGELICAANMELSLDLLAKLSQSGHKRIETLFTNDLDHGPYISETLRVDPTNDRLSALVEIYRMMRPGEPPTREAAESLFENLFFSEDRYDLSAVGRMKFNRSLLREEIEGSGILSKDDIIDVMKKLIDIRNGKGEVDDIDHLGNRRIRSVGEMAENQFRVGLVRVERAVKERLSLGDLDTLMPQDMINAKPISAAVKEFFGSSQLSQFMDQNNPLSEITHKRRISALGPGGLTRERAGFEVRDVHPTHYGRVCPIETPEGPNIGLINSLSVYAQTNEYGFLETPYRKVTDGVVTDEIHYLSAIEEGNYVIAQANSNLDEEGHFVEDLVTCRSKGESSLFSRDQVDYMDVSTQQVVSVGASLIPFLEHDDANRALMGANMQRQAVPTLRADKPLVGTGMERAVAVDSGVTAVAKRGGVVQYVDASRIVIKVNEDEMYPGEAGIDIYNLTKYTRSNQNTCINQMPCVSLGEPVERGDVLADGPSTDLGELALGQNMRVAFMPWNGYNFEDSILVSERVVQEDRFTTIHIQELACVSRDTKLGPEEITADIPNVGEAALSKLDESGIVYIGAEVTGGDILVGKVTPKGETQLTPEEKLLRAIFGEKASDVKDSSLRVPNGVSGTVIDVQVFTRDGVEKDKRALEIEEMQLKQAKKDLSEELQILEAGLFSRIRAVLVAGGVEAEKLDKLPRDRWLELGLTDEEKQNQLEQLAEQYDELKHEFEKKLEAKRRKITQGDDLAPGVLKIVKVYLAVKRRIQPGDKMAGRHGNKGVISKINPIEDMPYDENGTPVDIVLNPLGVPSRMNIGQILETHLGMAAKGIGDKINAMLKQQQEVAKLREFIQRAYDLGADVRQKVDLSTFSDEEVMRLAENLRKGMPIATPVFDGAKEAEIKELLKLGDLPTSGQIRLYDGRTGEQFERPVTVGYMYMLKLNHLVDDKMHARSTGSYSLVTQQPLGGKAQFGGQRFGEMEVWALEAYGAAYTLQEMLTVKSDDVNGRTKMYKNIVDGNHQMEPGMPESFNVLLKEIRSLGINIELEDE</sequence>
<accession>A1AIF9</accession>
<feature type="chain" id="PRO_0000300312" description="DNA-directed RNA polymerase subunit beta">
    <location>
        <begin position="1"/>
        <end position="1342"/>
    </location>
</feature>
<feature type="modified residue" description="N6-acetyllysine" evidence="1">
    <location>
        <position position="1022"/>
    </location>
</feature>
<feature type="modified residue" description="N6-acetyllysine" evidence="1">
    <location>
        <position position="1200"/>
    </location>
</feature>
<evidence type="ECO:0000255" key="1">
    <source>
        <dbReference type="HAMAP-Rule" id="MF_01321"/>
    </source>
</evidence>
<evidence type="ECO:0000305" key="2"/>
<comment type="function">
    <text evidence="1">DNA-dependent RNA polymerase catalyzes the transcription of DNA into RNA using the four ribonucleoside triphosphates as substrates.</text>
</comment>
<comment type="catalytic activity">
    <reaction evidence="1">
        <text>RNA(n) + a ribonucleoside 5'-triphosphate = RNA(n+1) + diphosphate</text>
        <dbReference type="Rhea" id="RHEA:21248"/>
        <dbReference type="Rhea" id="RHEA-COMP:14527"/>
        <dbReference type="Rhea" id="RHEA-COMP:17342"/>
        <dbReference type="ChEBI" id="CHEBI:33019"/>
        <dbReference type="ChEBI" id="CHEBI:61557"/>
        <dbReference type="ChEBI" id="CHEBI:140395"/>
        <dbReference type="EC" id="2.7.7.6"/>
    </reaction>
</comment>
<comment type="subunit">
    <text evidence="1">The RNAP catalytic core consists of 2 alpha, 1 beta, 1 beta' and 1 omega subunit. When a sigma factor is associated with the core the holoenzyme is formed, which can initiate transcription.</text>
</comment>
<comment type="similarity">
    <text evidence="1">Belongs to the RNA polymerase beta chain family.</text>
</comment>
<comment type="sequence caution" evidence="2">
    <conflict type="erroneous initiation">
        <sequence resource="EMBL-CDS" id="ABJ03449"/>
    </conflict>
</comment>
<organism>
    <name type="scientific">Escherichia coli O1:K1 / APEC</name>
    <dbReference type="NCBI Taxonomy" id="405955"/>
    <lineage>
        <taxon>Bacteria</taxon>
        <taxon>Pseudomonadati</taxon>
        <taxon>Pseudomonadota</taxon>
        <taxon>Gammaproteobacteria</taxon>
        <taxon>Enterobacterales</taxon>
        <taxon>Enterobacteriaceae</taxon>
        <taxon>Escherichia</taxon>
    </lineage>
</organism>
<gene>
    <name evidence="1" type="primary">rpoB</name>
    <name type="ordered locus">Ecok1_39550</name>
    <name type="ORF">APECO1_2486</name>
</gene>
<dbReference type="EC" id="2.7.7.6" evidence="1"/>
<dbReference type="EMBL" id="CP000468">
    <property type="protein sequence ID" value="ABJ03449.1"/>
    <property type="status" value="ALT_INIT"/>
    <property type="molecule type" value="Genomic_DNA"/>
</dbReference>
<dbReference type="RefSeq" id="WP_000263098.1">
    <property type="nucleotide sequence ID" value="NZ_CADILS010000053.1"/>
</dbReference>
<dbReference type="SMR" id="A1AIF9"/>
<dbReference type="GeneID" id="93777907"/>
<dbReference type="KEGG" id="ecv:APECO1_2486"/>
<dbReference type="HOGENOM" id="CLU_000524_4_0_6"/>
<dbReference type="Proteomes" id="UP000008216">
    <property type="component" value="Chromosome"/>
</dbReference>
<dbReference type="GO" id="GO:0000428">
    <property type="term" value="C:DNA-directed RNA polymerase complex"/>
    <property type="evidence" value="ECO:0007669"/>
    <property type="project" value="UniProtKB-KW"/>
</dbReference>
<dbReference type="GO" id="GO:0003677">
    <property type="term" value="F:DNA binding"/>
    <property type="evidence" value="ECO:0007669"/>
    <property type="project" value="UniProtKB-UniRule"/>
</dbReference>
<dbReference type="GO" id="GO:0003899">
    <property type="term" value="F:DNA-directed RNA polymerase activity"/>
    <property type="evidence" value="ECO:0007669"/>
    <property type="project" value="UniProtKB-UniRule"/>
</dbReference>
<dbReference type="GO" id="GO:0032549">
    <property type="term" value="F:ribonucleoside binding"/>
    <property type="evidence" value="ECO:0007669"/>
    <property type="project" value="InterPro"/>
</dbReference>
<dbReference type="GO" id="GO:0006351">
    <property type="term" value="P:DNA-templated transcription"/>
    <property type="evidence" value="ECO:0007669"/>
    <property type="project" value="UniProtKB-UniRule"/>
</dbReference>
<dbReference type="CDD" id="cd00653">
    <property type="entry name" value="RNA_pol_B_RPB2"/>
    <property type="match status" value="1"/>
</dbReference>
<dbReference type="FunFam" id="2.30.150.10:FF:000001">
    <property type="entry name" value="DNA-directed RNA polymerase subunit beta"/>
    <property type="match status" value="1"/>
</dbReference>
<dbReference type="FunFam" id="2.40.270.10:FF:000003">
    <property type="entry name" value="DNA-directed RNA polymerase subunit beta"/>
    <property type="match status" value="1"/>
</dbReference>
<dbReference type="FunFam" id="2.40.270.10:FF:000004">
    <property type="entry name" value="DNA-directed RNA polymerase subunit beta"/>
    <property type="match status" value="1"/>
</dbReference>
<dbReference type="FunFam" id="2.40.50.100:FF:000006">
    <property type="entry name" value="DNA-directed RNA polymerase subunit beta"/>
    <property type="match status" value="1"/>
</dbReference>
<dbReference type="FunFam" id="2.40.50.150:FF:000001">
    <property type="entry name" value="DNA-directed RNA polymerase subunit beta"/>
    <property type="match status" value="1"/>
</dbReference>
<dbReference type="FunFam" id="3.90.1100.10:FF:000002">
    <property type="entry name" value="DNA-directed RNA polymerase subunit beta"/>
    <property type="match status" value="1"/>
</dbReference>
<dbReference type="FunFam" id="3.90.1110.10:FF:000001">
    <property type="entry name" value="DNA-directed RNA polymerase subunit beta"/>
    <property type="match status" value="1"/>
</dbReference>
<dbReference type="FunFam" id="3.90.1110.10:FF:000004">
    <property type="entry name" value="DNA-directed RNA polymerase subunit beta"/>
    <property type="match status" value="1"/>
</dbReference>
<dbReference type="FunFam" id="3.90.1800.10:FF:000001">
    <property type="entry name" value="DNA-directed RNA polymerase subunit beta"/>
    <property type="match status" value="1"/>
</dbReference>
<dbReference type="Gene3D" id="2.40.50.100">
    <property type="match status" value="1"/>
</dbReference>
<dbReference type="Gene3D" id="2.40.50.150">
    <property type="match status" value="1"/>
</dbReference>
<dbReference type="Gene3D" id="3.90.1100.10">
    <property type="match status" value="2"/>
</dbReference>
<dbReference type="Gene3D" id="6.10.140.1670">
    <property type="match status" value="1"/>
</dbReference>
<dbReference type="Gene3D" id="2.30.150.10">
    <property type="entry name" value="DNA-directed RNA polymerase, beta subunit, external 1 domain"/>
    <property type="match status" value="1"/>
</dbReference>
<dbReference type="Gene3D" id="2.40.270.10">
    <property type="entry name" value="DNA-directed RNA polymerase, subunit 2, domain 6"/>
    <property type="match status" value="1"/>
</dbReference>
<dbReference type="Gene3D" id="3.90.1800.10">
    <property type="entry name" value="RNA polymerase alpha subunit dimerisation domain"/>
    <property type="match status" value="1"/>
</dbReference>
<dbReference type="Gene3D" id="3.90.1110.10">
    <property type="entry name" value="RNA polymerase Rpb2, domain 2"/>
    <property type="match status" value="1"/>
</dbReference>
<dbReference type="HAMAP" id="MF_01321">
    <property type="entry name" value="RNApol_bact_RpoB"/>
    <property type="match status" value="1"/>
</dbReference>
<dbReference type="InterPro" id="IPR042107">
    <property type="entry name" value="DNA-dir_RNA_pol_bsu_ext_1_sf"/>
</dbReference>
<dbReference type="InterPro" id="IPR019462">
    <property type="entry name" value="DNA-dir_RNA_pol_bsu_external_1"/>
</dbReference>
<dbReference type="InterPro" id="IPR015712">
    <property type="entry name" value="DNA-dir_RNA_pol_su2"/>
</dbReference>
<dbReference type="InterPro" id="IPR007120">
    <property type="entry name" value="DNA-dir_RNAP_su2_dom"/>
</dbReference>
<dbReference type="InterPro" id="IPR037033">
    <property type="entry name" value="DNA-dir_RNAP_su2_hyb_sf"/>
</dbReference>
<dbReference type="InterPro" id="IPR010243">
    <property type="entry name" value="RNA_pol_bsu_bac"/>
</dbReference>
<dbReference type="InterPro" id="IPR007121">
    <property type="entry name" value="RNA_pol_bsu_CS"/>
</dbReference>
<dbReference type="InterPro" id="IPR007644">
    <property type="entry name" value="RNA_pol_bsu_protrusion"/>
</dbReference>
<dbReference type="InterPro" id="IPR007642">
    <property type="entry name" value="RNA_pol_Rpb2_2"/>
</dbReference>
<dbReference type="InterPro" id="IPR037034">
    <property type="entry name" value="RNA_pol_Rpb2_2_sf"/>
</dbReference>
<dbReference type="InterPro" id="IPR007645">
    <property type="entry name" value="RNA_pol_Rpb2_3"/>
</dbReference>
<dbReference type="InterPro" id="IPR007641">
    <property type="entry name" value="RNA_pol_Rpb2_7"/>
</dbReference>
<dbReference type="InterPro" id="IPR014724">
    <property type="entry name" value="RNA_pol_RPB2_OB-fold"/>
</dbReference>
<dbReference type="NCBIfam" id="NF001616">
    <property type="entry name" value="PRK00405.1"/>
    <property type="match status" value="1"/>
</dbReference>
<dbReference type="NCBIfam" id="TIGR02013">
    <property type="entry name" value="rpoB"/>
    <property type="match status" value="1"/>
</dbReference>
<dbReference type="PANTHER" id="PTHR20856">
    <property type="entry name" value="DNA-DIRECTED RNA POLYMERASE I SUBUNIT 2"/>
    <property type="match status" value="1"/>
</dbReference>
<dbReference type="Pfam" id="PF04563">
    <property type="entry name" value="RNA_pol_Rpb2_1"/>
    <property type="match status" value="1"/>
</dbReference>
<dbReference type="Pfam" id="PF04561">
    <property type="entry name" value="RNA_pol_Rpb2_2"/>
    <property type="match status" value="2"/>
</dbReference>
<dbReference type="Pfam" id="PF04565">
    <property type="entry name" value="RNA_pol_Rpb2_3"/>
    <property type="match status" value="1"/>
</dbReference>
<dbReference type="Pfam" id="PF10385">
    <property type="entry name" value="RNA_pol_Rpb2_45"/>
    <property type="match status" value="1"/>
</dbReference>
<dbReference type="Pfam" id="PF00562">
    <property type="entry name" value="RNA_pol_Rpb2_6"/>
    <property type="match status" value="1"/>
</dbReference>
<dbReference type="Pfam" id="PF04560">
    <property type="entry name" value="RNA_pol_Rpb2_7"/>
    <property type="match status" value="1"/>
</dbReference>
<dbReference type="SUPFAM" id="SSF64484">
    <property type="entry name" value="beta and beta-prime subunits of DNA dependent RNA-polymerase"/>
    <property type="match status" value="1"/>
</dbReference>
<dbReference type="PROSITE" id="PS01166">
    <property type="entry name" value="RNA_POL_BETA"/>
    <property type="match status" value="1"/>
</dbReference>
<protein>
    <recommendedName>
        <fullName evidence="1">DNA-directed RNA polymerase subunit beta</fullName>
        <shortName evidence="1">RNAP subunit beta</shortName>
        <ecNumber evidence="1">2.7.7.6</ecNumber>
    </recommendedName>
    <alternativeName>
        <fullName evidence="1">RNA polymerase subunit beta</fullName>
    </alternativeName>
    <alternativeName>
        <fullName evidence="1">Transcriptase subunit beta</fullName>
    </alternativeName>
</protein>